<name>NANE_CORGB</name>
<gene>
    <name evidence="1" type="primary">nanE</name>
    <name type="ordered locus">cgR_2553</name>
</gene>
<protein>
    <recommendedName>
        <fullName evidence="1">Putative N-acetylmannosamine-6-phosphate 2-epimerase</fullName>
        <ecNumber evidence="1">5.1.3.9</ecNumber>
    </recommendedName>
    <alternativeName>
        <fullName evidence="1">ManNAc-6-P epimerase</fullName>
    </alternativeName>
</protein>
<dbReference type="EC" id="5.1.3.9" evidence="1"/>
<dbReference type="EMBL" id="AP009044">
    <property type="protein sequence ID" value="BAF55564.1"/>
    <property type="molecule type" value="Genomic_DNA"/>
</dbReference>
<dbReference type="RefSeq" id="WP_011015278.1">
    <property type="nucleotide sequence ID" value="NC_009342.1"/>
</dbReference>
<dbReference type="SMR" id="A4QH48"/>
<dbReference type="GeneID" id="1020597"/>
<dbReference type="KEGG" id="cgt:cgR_2553"/>
<dbReference type="HOGENOM" id="CLU_086300_1_0_11"/>
<dbReference type="PhylomeDB" id="A4QH48"/>
<dbReference type="UniPathway" id="UPA00629">
    <property type="reaction ID" value="UER00682"/>
</dbReference>
<dbReference type="Proteomes" id="UP000006698">
    <property type="component" value="Chromosome"/>
</dbReference>
<dbReference type="GO" id="GO:0005829">
    <property type="term" value="C:cytosol"/>
    <property type="evidence" value="ECO:0007669"/>
    <property type="project" value="TreeGrafter"/>
</dbReference>
<dbReference type="GO" id="GO:0047465">
    <property type="term" value="F:N-acylglucosamine-6-phosphate 2-epimerase activity"/>
    <property type="evidence" value="ECO:0007669"/>
    <property type="project" value="UniProtKB-EC"/>
</dbReference>
<dbReference type="GO" id="GO:0005975">
    <property type="term" value="P:carbohydrate metabolic process"/>
    <property type="evidence" value="ECO:0007669"/>
    <property type="project" value="UniProtKB-UniRule"/>
</dbReference>
<dbReference type="GO" id="GO:0006053">
    <property type="term" value="P:N-acetylmannosamine catabolic process"/>
    <property type="evidence" value="ECO:0007669"/>
    <property type="project" value="TreeGrafter"/>
</dbReference>
<dbReference type="GO" id="GO:0019262">
    <property type="term" value="P:N-acetylneuraminate catabolic process"/>
    <property type="evidence" value="ECO:0007669"/>
    <property type="project" value="UniProtKB-UniRule"/>
</dbReference>
<dbReference type="CDD" id="cd04729">
    <property type="entry name" value="NanE"/>
    <property type="match status" value="1"/>
</dbReference>
<dbReference type="Gene3D" id="3.20.20.70">
    <property type="entry name" value="Aldolase class I"/>
    <property type="match status" value="1"/>
</dbReference>
<dbReference type="HAMAP" id="MF_01235">
    <property type="entry name" value="ManNAc6P_epimer"/>
    <property type="match status" value="1"/>
</dbReference>
<dbReference type="InterPro" id="IPR013785">
    <property type="entry name" value="Aldolase_TIM"/>
</dbReference>
<dbReference type="InterPro" id="IPR007260">
    <property type="entry name" value="NanE"/>
</dbReference>
<dbReference type="InterPro" id="IPR011060">
    <property type="entry name" value="RibuloseP-bd_barrel"/>
</dbReference>
<dbReference type="NCBIfam" id="NF002231">
    <property type="entry name" value="PRK01130.1"/>
    <property type="match status" value="1"/>
</dbReference>
<dbReference type="PANTHER" id="PTHR36204">
    <property type="entry name" value="N-ACETYLMANNOSAMINE-6-PHOSPHATE 2-EPIMERASE-RELATED"/>
    <property type="match status" value="1"/>
</dbReference>
<dbReference type="PANTHER" id="PTHR36204:SF1">
    <property type="entry name" value="N-ACETYLMANNOSAMINE-6-PHOSPHATE 2-EPIMERASE-RELATED"/>
    <property type="match status" value="1"/>
</dbReference>
<dbReference type="Pfam" id="PF04131">
    <property type="entry name" value="NanE"/>
    <property type="match status" value="1"/>
</dbReference>
<dbReference type="SUPFAM" id="SSF51366">
    <property type="entry name" value="Ribulose-phoshate binding barrel"/>
    <property type="match status" value="1"/>
</dbReference>
<keyword id="KW-0119">Carbohydrate metabolism</keyword>
<keyword id="KW-0413">Isomerase</keyword>
<reference key="1">
    <citation type="journal article" date="2007" name="Microbiology">
        <title>Comparative analysis of the Corynebacterium glutamicum group and complete genome sequence of strain R.</title>
        <authorList>
            <person name="Yukawa H."/>
            <person name="Omumasaba C.A."/>
            <person name="Nonaka H."/>
            <person name="Kos P."/>
            <person name="Okai N."/>
            <person name="Suzuki N."/>
            <person name="Suda M."/>
            <person name="Tsuge Y."/>
            <person name="Watanabe J."/>
            <person name="Ikeda Y."/>
            <person name="Vertes A.A."/>
            <person name="Inui M."/>
        </authorList>
    </citation>
    <scope>NUCLEOTIDE SEQUENCE [LARGE SCALE GENOMIC DNA]</scope>
    <source>
        <strain>R</strain>
    </source>
</reference>
<accession>A4QH48</accession>
<evidence type="ECO:0000255" key="1">
    <source>
        <dbReference type="HAMAP-Rule" id="MF_01235"/>
    </source>
</evidence>
<organism>
    <name type="scientific">Corynebacterium glutamicum (strain R)</name>
    <dbReference type="NCBI Taxonomy" id="340322"/>
    <lineage>
        <taxon>Bacteria</taxon>
        <taxon>Bacillati</taxon>
        <taxon>Actinomycetota</taxon>
        <taxon>Actinomycetes</taxon>
        <taxon>Mycobacteriales</taxon>
        <taxon>Corynebacteriaceae</taxon>
        <taxon>Corynebacterium</taxon>
    </lineage>
</organism>
<comment type="function">
    <text evidence="1">Converts N-acetylmannosamine-6-phosphate (ManNAc-6-P) to N-acetylglucosamine-6-phosphate (GlcNAc-6-P).</text>
</comment>
<comment type="catalytic activity">
    <reaction evidence="1">
        <text>an N-acyl-D-glucosamine 6-phosphate = an N-acyl-D-mannosamine 6-phosphate</text>
        <dbReference type="Rhea" id="RHEA:23932"/>
        <dbReference type="ChEBI" id="CHEBI:57599"/>
        <dbReference type="ChEBI" id="CHEBI:57666"/>
        <dbReference type="EC" id="5.1.3.9"/>
    </reaction>
</comment>
<comment type="pathway">
    <text evidence="1">Amino-sugar metabolism; N-acetylneuraminate degradation; D-fructose 6-phosphate from N-acetylneuraminate: step 3/5.</text>
</comment>
<comment type="similarity">
    <text evidence="1">Belongs to the NanE family.</text>
</comment>
<feature type="chain" id="PRO_0000301470" description="Putative N-acetylmannosamine-6-phosphate 2-epimerase">
    <location>
        <begin position="1"/>
        <end position="232"/>
    </location>
</feature>
<sequence length="232" mass="24361">MDLNTQRSKLYAQLQGQLIVSVQAPDGHAMRDTHTLTHVAAACVDGGAPAIRCGGYGGLEDIRSISNRVDVPVFGLTKEGSEGVYITPTRDSVRAVAESGATVVCADATFRPRPDGSTFAELVTVAHDSGILIMADCATPEEVLSAHKAGADFVSTTLAGYTEHREKTVGPDFDCLREARELVPDAFLIGEGRFSNPADVAHGRLIGANAIIVGTAITDPGFITGQFASLLH</sequence>
<proteinExistence type="inferred from homology"/>